<name>MECR_STAAU</name>
<evidence type="ECO:0000305" key="1"/>
<evidence type="ECO:0007829" key="2">
    <source>
        <dbReference type="PDB" id="6O9S"/>
    </source>
</evidence>
<protein>
    <recommendedName>
        <fullName>Methicillin resistance mecR1 protein</fullName>
    </recommendedName>
</protein>
<keyword id="KW-0002">3D-structure</keyword>
<keyword id="KW-0046">Antibiotic resistance</keyword>
<feature type="chain" id="PRO_0000096351" description="Methicillin resistance mecR1 protein">
    <location>
        <begin position="1"/>
        <end position="585"/>
    </location>
</feature>
<feature type="region of interest" description="Beta-lactamase-like">
    <location>
        <begin position="351"/>
        <end position="585"/>
    </location>
</feature>
<feature type="strand" evidence="2">
    <location>
        <begin position="348"/>
        <end position="350"/>
    </location>
</feature>
<feature type="helix" evidence="2">
    <location>
        <begin position="352"/>
        <end position="358"/>
    </location>
</feature>
<feature type="strand" evidence="2">
    <location>
        <begin position="361"/>
        <end position="369"/>
    </location>
</feature>
<feature type="turn" evidence="2">
    <location>
        <begin position="370"/>
        <end position="373"/>
    </location>
</feature>
<feature type="strand" evidence="2">
    <location>
        <begin position="374"/>
        <end position="378"/>
    </location>
</feature>
<feature type="helix" evidence="2">
    <location>
        <begin position="380"/>
        <end position="384"/>
    </location>
</feature>
<feature type="helix" evidence="2">
    <location>
        <begin position="390"/>
        <end position="393"/>
    </location>
</feature>
<feature type="helix" evidence="2">
    <location>
        <begin position="394"/>
        <end position="403"/>
    </location>
</feature>
<feature type="strand" evidence="2">
    <location>
        <begin position="406"/>
        <end position="408"/>
    </location>
</feature>
<feature type="helix" evidence="2">
    <location>
        <begin position="424"/>
        <end position="426"/>
    </location>
</feature>
<feature type="helix" evidence="2">
    <location>
        <begin position="432"/>
        <end position="437"/>
    </location>
</feature>
<feature type="helix" evidence="2">
    <location>
        <begin position="441"/>
        <end position="449"/>
    </location>
</feature>
<feature type="helix" evidence="2">
    <location>
        <begin position="453"/>
        <end position="463"/>
    </location>
</feature>
<feature type="turn" evidence="2">
    <location>
        <begin position="474"/>
        <end position="477"/>
    </location>
</feature>
<feature type="strand" evidence="2">
    <location>
        <begin position="478"/>
        <end position="481"/>
    </location>
</feature>
<feature type="helix" evidence="2">
    <location>
        <begin position="486"/>
        <end position="497"/>
    </location>
</feature>
<feature type="strand" evidence="2">
    <location>
        <begin position="501"/>
        <end position="503"/>
    </location>
</feature>
<feature type="helix" evidence="2">
    <location>
        <begin position="505"/>
        <end position="514"/>
    </location>
</feature>
<feature type="strand" evidence="2">
    <location>
        <begin position="516"/>
        <end position="519"/>
    </location>
</feature>
<feature type="strand" evidence="2">
    <location>
        <begin position="521"/>
        <end position="534"/>
    </location>
</feature>
<feature type="strand" evidence="2">
    <location>
        <begin position="537"/>
        <end position="551"/>
    </location>
</feature>
<feature type="strand" evidence="2">
    <location>
        <begin position="553"/>
        <end position="561"/>
    </location>
</feature>
<feature type="helix" evidence="2">
    <location>
        <begin position="568"/>
        <end position="581"/>
    </location>
</feature>
<sequence>MLSSFLMLSIISSLLTICVIFLVRMLYIKYTQNIMSHKIWLLVLVSTLIPLIPFYKISNFTFSKDMMNRNVSDTTSSVSHMLDGQQSSVTKDLAINVNQFETSNITYMILLIWVFGSLLCLFYMIKAFRQIDVIKSSSLESSYLNERLKVCQSKMQFYKKHITISYSSNIDNPMVFGLVKSQIVLPTVVVETMNDKEIEYIILHELSHVKSHDLIFNQLYVVFKMIFWFNPALYISKTMMDNDCEKVCDRNVLKILNRHEHIRYGESILKCSILKSQHINNVAAQYLLGFNSNIKERVKYIALYDSMPKPNRNKRIVAYIVCSISLLIQAPLLSAHVQQDKYETNVSYKKLNQLAPYFKGFDGSFVLYNEREQAYSIYNEPESKQRYSPNSTYKIYLALMAFDQNLLSLNHTEQQWDKHQYPFKEWNQDQNLNSSMKYSVNWYYENLNKHLRQDEVKSYLDLIEYGNEEISGNENYWNESSLKISAIEQVNLLKNMKQHNMHFDNKAIEKVENSMTLKQKDTYKYVGKTGTGIVNHKEANGWFVGYVETKDNTYYFATHLKGEDNANGEKAQQISERILKEMELI</sequence>
<reference key="1">
    <citation type="journal article" date="1994" name="Antimicrob. Agents Chemother.">
        <title>Dissemination among staphylococci of DNA sequences associated with methicillin resistance.</title>
        <authorList>
            <person name="Archer G.L."/>
            <person name="Niemeyer D.M."/>
            <person name="Thanassi J.A."/>
            <person name="Pucci M.J."/>
        </authorList>
    </citation>
    <scope>NUCLEOTIDE SEQUENCE [GENOMIC DNA]</scope>
    <source>
        <strain>BMS-1</strain>
    </source>
</reference>
<proteinExistence type="evidence at protein level"/>
<organism>
    <name type="scientific">Staphylococcus aureus</name>
    <dbReference type="NCBI Taxonomy" id="1280"/>
    <lineage>
        <taxon>Bacteria</taxon>
        <taxon>Bacillati</taxon>
        <taxon>Bacillota</taxon>
        <taxon>Bacilli</taxon>
        <taxon>Bacillales</taxon>
        <taxon>Staphylococcaceae</taxon>
        <taxon>Staphylococcus</taxon>
    </lineage>
</organism>
<gene>
    <name type="primary">mecR1</name>
    <name type="synonym">mecR</name>
</gene>
<comment type="function">
    <text>Penicillin-interactive protein and potential antirepressor.</text>
</comment>
<comment type="similarity">
    <text evidence="1">Belongs to the peptidase M56 family.</text>
</comment>
<accession>P0A0B1</accession>
<accession>P26597</accession>
<accession>P72353</accession>
<dbReference type="EMBL" id="L14020">
    <property type="protein sequence ID" value="AAA21182.1"/>
    <property type="molecule type" value="Genomic_DNA"/>
</dbReference>
<dbReference type="PIR" id="S20575">
    <property type="entry name" value="S20575"/>
</dbReference>
<dbReference type="RefSeq" id="WP_000952923.1">
    <property type="nucleotide sequence ID" value="NZ_WSZD01000001.1"/>
</dbReference>
<dbReference type="PDB" id="6O9S">
    <property type="method" value="X-ray"/>
    <property type="resolution" value="1.59 A"/>
    <property type="chains" value="A=334-585"/>
</dbReference>
<dbReference type="PDBsum" id="6O9S"/>
<dbReference type="SMR" id="P0A0B1"/>
<dbReference type="ChEMBL" id="CHEMBL3706557"/>
<dbReference type="MEROPS" id="M56.002"/>
<dbReference type="OMA" id="TEMEISC"/>
<dbReference type="GO" id="GO:0008658">
    <property type="term" value="F:penicillin binding"/>
    <property type="evidence" value="ECO:0007669"/>
    <property type="project" value="InterPro"/>
</dbReference>
<dbReference type="GO" id="GO:0046677">
    <property type="term" value="P:response to antibiotic"/>
    <property type="evidence" value="ECO:0007669"/>
    <property type="project" value="UniProtKB-KW"/>
</dbReference>
<dbReference type="CDD" id="cd07341">
    <property type="entry name" value="M56_BlaR1_MecR1_like"/>
    <property type="match status" value="1"/>
</dbReference>
<dbReference type="Gene3D" id="3.40.710.10">
    <property type="entry name" value="DD-peptidase/beta-lactamase superfamily"/>
    <property type="match status" value="1"/>
</dbReference>
<dbReference type="Gene3D" id="3.30.2010.10">
    <property type="entry name" value="Metalloproteases ('zincins'), catalytic domain"/>
    <property type="match status" value="1"/>
</dbReference>
<dbReference type="InterPro" id="IPR012338">
    <property type="entry name" value="Beta-lactam/transpept-like"/>
</dbReference>
<dbReference type="InterPro" id="IPR052173">
    <property type="entry name" value="Beta-lactam_resp_regulator"/>
</dbReference>
<dbReference type="InterPro" id="IPR001460">
    <property type="entry name" value="PCN-bd_Tpept"/>
</dbReference>
<dbReference type="InterPro" id="IPR008756">
    <property type="entry name" value="Peptidase_M56"/>
</dbReference>
<dbReference type="NCBIfam" id="NF000326">
    <property type="entry name" value="blaR1_generic"/>
    <property type="match status" value="1"/>
</dbReference>
<dbReference type="NCBIfam" id="NF033109">
    <property type="entry name" value="sensor_MecR1"/>
    <property type="match status" value="1"/>
</dbReference>
<dbReference type="PANTHER" id="PTHR34978">
    <property type="entry name" value="POSSIBLE SENSOR-TRANSDUCER PROTEIN BLAR"/>
    <property type="match status" value="1"/>
</dbReference>
<dbReference type="PANTHER" id="PTHR34978:SF3">
    <property type="entry name" value="SLR0241 PROTEIN"/>
    <property type="match status" value="1"/>
</dbReference>
<dbReference type="Pfam" id="PF05569">
    <property type="entry name" value="Peptidase_M56"/>
    <property type="match status" value="1"/>
</dbReference>
<dbReference type="Pfam" id="PF00905">
    <property type="entry name" value="Transpeptidase"/>
    <property type="match status" value="1"/>
</dbReference>
<dbReference type="SUPFAM" id="SSF56601">
    <property type="entry name" value="beta-lactamase/transpeptidase-like"/>
    <property type="match status" value="1"/>
</dbReference>